<proteinExistence type="inferred from homology"/>
<accession>Q9A1Z3</accession>
<accession>Q491S7</accession>
<comment type="catalytic activity">
    <reaction evidence="1">
        <text>5-amino-1-(5-phospho-D-ribosyl)imidazole-4-carboxylate + L-aspartate + ATP = (2S)-2-[5-amino-1-(5-phospho-beta-D-ribosyl)imidazole-4-carboxamido]succinate + ADP + phosphate + 2 H(+)</text>
        <dbReference type="Rhea" id="RHEA:22628"/>
        <dbReference type="ChEBI" id="CHEBI:15378"/>
        <dbReference type="ChEBI" id="CHEBI:29991"/>
        <dbReference type="ChEBI" id="CHEBI:30616"/>
        <dbReference type="ChEBI" id="CHEBI:43474"/>
        <dbReference type="ChEBI" id="CHEBI:58443"/>
        <dbReference type="ChEBI" id="CHEBI:77657"/>
        <dbReference type="ChEBI" id="CHEBI:456216"/>
        <dbReference type="EC" id="6.3.2.6"/>
    </reaction>
</comment>
<comment type="pathway">
    <text evidence="1">Purine metabolism; IMP biosynthesis via de novo pathway; 5-amino-1-(5-phospho-D-ribosyl)imidazole-4-carboxamide from 5-amino-1-(5-phospho-D-ribosyl)imidazole-4-carboxylate: step 1/2.</text>
</comment>
<comment type="similarity">
    <text evidence="1">Belongs to the SAICAR synthetase family.</text>
</comment>
<comment type="sequence caution" evidence="2">
    <conflict type="erroneous initiation">
        <sequence resource="EMBL-CDS" id="AAK33163"/>
    </conflict>
</comment>
<comment type="sequence caution" evidence="2">
    <conflict type="erroneous initiation">
        <sequence resource="EMBL-CDS" id="AAZ50641"/>
    </conflict>
</comment>
<dbReference type="EC" id="6.3.2.6" evidence="1"/>
<dbReference type="EMBL" id="AE004092">
    <property type="protein sequence ID" value="AAK33163.1"/>
    <property type="status" value="ALT_INIT"/>
    <property type="molecule type" value="Genomic_DNA"/>
</dbReference>
<dbReference type="EMBL" id="CP000017">
    <property type="protein sequence ID" value="AAZ50641.1"/>
    <property type="status" value="ALT_INIT"/>
    <property type="molecule type" value="Genomic_DNA"/>
</dbReference>
<dbReference type="RefSeq" id="NP_268441.1">
    <property type="nucleotide sequence ID" value="NC_002737.2"/>
</dbReference>
<dbReference type="SMR" id="Q9A1Z3"/>
<dbReference type="PaxDb" id="1314-HKU360_00054"/>
<dbReference type="KEGG" id="spy:SPy_0024"/>
<dbReference type="KEGG" id="spz:M5005_Spy0022"/>
<dbReference type="PATRIC" id="fig|160490.10.peg.23"/>
<dbReference type="HOGENOM" id="CLU_061495_2_0_9"/>
<dbReference type="OMA" id="EFCYKND"/>
<dbReference type="UniPathway" id="UPA00074">
    <property type="reaction ID" value="UER00131"/>
</dbReference>
<dbReference type="Proteomes" id="UP000000750">
    <property type="component" value="Chromosome"/>
</dbReference>
<dbReference type="GO" id="GO:0005524">
    <property type="term" value="F:ATP binding"/>
    <property type="evidence" value="ECO:0007669"/>
    <property type="project" value="UniProtKB-KW"/>
</dbReference>
<dbReference type="GO" id="GO:0004639">
    <property type="term" value="F:phosphoribosylaminoimidazolesuccinocarboxamide synthase activity"/>
    <property type="evidence" value="ECO:0007669"/>
    <property type="project" value="UniProtKB-UniRule"/>
</dbReference>
<dbReference type="GO" id="GO:0006189">
    <property type="term" value="P:'de novo' IMP biosynthetic process"/>
    <property type="evidence" value="ECO:0007669"/>
    <property type="project" value="UniProtKB-UniRule"/>
</dbReference>
<dbReference type="GO" id="GO:0009236">
    <property type="term" value="P:cobalamin biosynthetic process"/>
    <property type="evidence" value="ECO:0007669"/>
    <property type="project" value="InterPro"/>
</dbReference>
<dbReference type="CDD" id="cd01415">
    <property type="entry name" value="SAICAR_synt_PurC"/>
    <property type="match status" value="1"/>
</dbReference>
<dbReference type="FunFam" id="3.30.470.20:FF:000006">
    <property type="entry name" value="Phosphoribosylaminoimidazole-succinocarboxamide synthase"/>
    <property type="match status" value="1"/>
</dbReference>
<dbReference type="Gene3D" id="3.30.470.20">
    <property type="entry name" value="ATP-grasp fold, B domain"/>
    <property type="match status" value="1"/>
</dbReference>
<dbReference type="Gene3D" id="3.30.200.20">
    <property type="entry name" value="Phosphorylase Kinase, domain 1"/>
    <property type="match status" value="1"/>
</dbReference>
<dbReference type="HAMAP" id="MF_00137">
    <property type="entry name" value="SAICAR_synth"/>
    <property type="match status" value="1"/>
</dbReference>
<dbReference type="InterPro" id="IPR028923">
    <property type="entry name" value="SAICAR_synt/ADE2_N"/>
</dbReference>
<dbReference type="InterPro" id="IPR033934">
    <property type="entry name" value="SAICAR_synt_PurC"/>
</dbReference>
<dbReference type="InterPro" id="IPR001636">
    <property type="entry name" value="SAICAR_synth"/>
</dbReference>
<dbReference type="InterPro" id="IPR050089">
    <property type="entry name" value="SAICAR_synthetase"/>
</dbReference>
<dbReference type="InterPro" id="IPR018236">
    <property type="entry name" value="SAICAR_synthetase_CS"/>
</dbReference>
<dbReference type="NCBIfam" id="TIGR00081">
    <property type="entry name" value="purC"/>
    <property type="match status" value="1"/>
</dbReference>
<dbReference type="PANTHER" id="PTHR43599">
    <property type="entry name" value="MULTIFUNCTIONAL PROTEIN ADE2"/>
    <property type="match status" value="1"/>
</dbReference>
<dbReference type="PANTHER" id="PTHR43599:SF3">
    <property type="entry name" value="SI:DKEY-6E2.2"/>
    <property type="match status" value="1"/>
</dbReference>
<dbReference type="Pfam" id="PF01259">
    <property type="entry name" value="SAICAR_synt"/>
    <property type="match status" value="1"/>
</dbReference>
<dbReference type="SUPFAM" id="SSF56104">
    <property type="entry name" value="SAICAR synthase-like"/>
    <property type="match status" value="1"/>
</dbReference>
<dbReference type="PROSITE" id="PS01057">
    <property type="entry name" value="SAICAR_SYNTHETASE_1"/>
    <property type="match status" value="1"/>
</dbReference>
<dbReference type="PROSITE" id="PS01058">
    <property type="entry name" value="SAICAR_SYNTHETASE_2"/>
    <property type="match status" value="1"/>
</dbReference>
<reference key="1">
    <citation type="journal article" date="2001" name="Proc. Natl. Acad. Sci. U.S.A.">
        <title>Complete genome sequence of an M1 strain of Streptococcus pyogenes.</title>
        <authorList>
            <person name="Ferretti J.J."/>
            <person name="McShan W.M."/>
            <person name="Ajdic D.J."/>
            <person name="Savic D.J."/>
            <person name="Savic G."/>
            <person name="Lyon K."/>
            <person name="Primeaux C."/>
            <person name="Sezate S."/>
            <person name="Suvorov A.N."/>
            <person name="Kenton S."/>
            <person name="Lai H.S."/>
            <person name="Lin S.P."/>
            <person name="Qian Y."/>
            <person name="Jia H.G."/>
            <person name="Najar F.Z."/>
            <person name="Ren Q."/>
            <person name="Zhu H."/>
            <person name="Song L."/>
            <person name="White J."/>
            <person name="Yuan X."/>
            <person name="Clifton S.W."/>
            <person name="Roe B.A."/>
            <person name="McLaughlin R.E."/>
        </authorList>
    </citation>
    <scope>NUCLEOTIDE SEQUENCE [LARGE SCALE GENOMIC DNA]</scope>
    <source>
        <strain>ATCC 700294 / SF370 / Serotype M1</strain>
    </source>
</reference>
<reference key="2">
    <citation type="journal article" date="2005" name="J. Infect. Dis.">
        <title>Evolutionary origin and emergence of a highly successful clone of serotype M1 group A Streptococcus involved multiple horizontal gene transfer events.</title>
        <authorList>
            <person name="Sumby P."/>
            <person name="Porcella S.F."/>
            <person name="Madrigal A.G."/>
            <person name="Barbian K.D."/>
            <person name="Virtaneva K."/>
            <person name="Ricklefs S.M."/>
            <person name="Sturdevant D.E."/>
            <person name="Graham M.R."/>
            <person name="Vuopio-Varkila J."/>
            <person name="Hoe N.P."/>
            <person name="Musser J.M."/>
        </authorList>
    </citation>
    <scope>NUCLEOTIDE SEQUENCE [LARGE SCALE GENOMIC DNA]</scope>
    <source>
        <strain>ATCC BAA-947 / MGAS5005 / Serotype M1</strain>
    </source>
</reference>
<organism>
    <name type="scientific">Streptococcus pyogenes serotype M1</name>
    <dbReference type="NCBI Taxonomy" id="301447"/>
    <lineage>
        <taxon>Bacteria</taxon>
        <taxon>Bacillati</taxon>
        <taxon>Bacillota</taxon>
        <taxon>Bacilli</taxon>
        <taxon>Lactobacillales</taxon>
        <taxon>Streptococcaceae</taxon>
        <taxon>Streptococcus</taxon>
    </lineage>
</organism>
<keyword id="KW-0067">ATP-binding</keyword>
<keyword id="KW-0436">Ligase</keyword>
<keyword id="KW-0547">Nucleotide-binding</keyword>
<keyword id="KW-0658">Purine biosynthesis</keyword>
<keyword id="KW-1185">Reference proteome</keyword>
<protein>
    <recommendedName>
        <fullName evidence="1">Phosphoribosylaminoimidazole-succinocarboxamide synthase</fullName>
        <ecNumber evidence="1">6.3.2.6</ecNumber>
    </recommendedName>
    <alternativeName>
        <fullName evidence="1">SAICAR synthetase</fullName>
    </alternativeName>
</protein>
<name>PUR7_STRP1</name>
<sequence length="234" mass="26837">MTNQLIYKGKAKDIYSTKDENVIRTVYKDQATMLNGARKETIDGKGALNNQISSLIFEKLNKAGVVTHYIEQISKNEQLNKKVDIIPLEVVLRNVTAGSFSKRFGVEEGHVLETPIVEFYYKNDDLDDPFINDEHVKFLGIVNDEEIAYLKGETRRINELLKGWFAQIGLNLIDFKLEFGFDQEGTIILADEFSPDNCRLWDKNGNHMDKDVFRRDLGNLTDVYQVVLEKLIAL</sequence>
<evidence type="ECO:0000255" key="1">
    <source>
        <dbReference type="HAMAP-Rule" id="MF_00137"/>
    </source>
</evidence>
<evidence type="ECO:0000305" key="2"/>
<feature type="chain" id="PRO_0000100883" description="Phosphoribosylaminoimidazole-succinocarboxamide synthase">
    <location>
        <begin position="1"/>
        <end position="234"/>
    </location>
</feature>
<gene>
    <name evidence="1" type="primary">purC</name>
    <name type="ordered locus">SPy_0024</name>
    <name type="ordered locus">M5005_Spy0022</name>
</gene>